<gene>
    <name type="primary">ANKRD29</name>
</gene>
<dbReference type="EMBL" id="AK057782">
    <property type="protein sequence ID" value="BAB71569.1"/>
    <property type="molecule type" value="mRNA"/>
</dbReference>
<dbReference type="EMBL" id="AK123197">
    <property type="protein sequence ID" value="BAC85555.1"/>
    <property type="status" value="ALT_SEQ"/>
    <property type="molecule type" value="mRNA"/>
</dbReference>
<dbReference type="EMBL" id="AK313667">
    <property type="protein sequence ID" value="BAG36419.1"/>
    <property type="molecule type" value="mRNA"/>
</dbReference>
<dbReference type="EMBL" id="AC010853">
    <property type="status" value="NOT_ANNOTATED_CDS"/>
    <property type="molecule type" value="Genomic_DNA"/>
</dbReference>
<dbReference type="EMBL" id="CH471088">
    <property type="protein sequence ID" value="EAX01160.1"/>
    <property type="molecule type" value="Genomic_DNA"/>
</dbReference>
<dbReference type="EMBL" id="BC030622">
    <property type="protein sequence ID" value="AAH30622.1"/>
    <property type="molecule type" value="mRNA"/>
</dbReference>
<dbReference type="CCDS" id="CCDS11879.1">
    <molecule id="Q8N6D5-1"/>
</dbReference>
<dbReference type="CCDS" id="CCDS77164.1">
    <molecule id="Q8N6D5-3"/>
</dbReference>
<dbReference type="RefSeq" id="NP_001295167.1">
    <molecule id="Q8N6D5-3"/>
    <property type="nucleotide sequence ID" value="NM_001308238.2"/>
</dbReference>
<dbReference type="RefSeq" id="NP_775776.2">
    <molecule id="Q8N6D5-1"/>
    <property type="nucleotide sequence ID" value="NM_173505.4"/>
</dbReference>
<dbReference type="SMR" id="Q8N6D5"/>
<dbReference type="BioGRID" id="127061">
    <property type="interactions" value="18"/>
</dbReference>
<dbReference type="FunCoup" id="Q8N6D5">
    <property type="interactions" value="189"/>
</dbReference>
<dbReference type="IntAct" id="Q8N6D5">
    <property type="interactions" value="18"/>
</dbReference>
<dbReference type="STRING" id="9606.ENSP00000468354"/>
<dbReference type="iPTMnet" id="Q8N6D5"/>
<dbReference type="PhosphoSitePlus" id="Q8N6D5"/>
<dbReference type="BioMuta" id="ANKRD29"/>
<dbReference type="DMDM" id="109940219"/>
<dbReference type="MassIVE" id="Q8N6D5"/>
<dbReference type="PaxDb" id="9606-ENSP00000468354"/>
<dbReference type="PeptideAtlas" id="Q8N6D5"/>
<dbReference type="ProteomicsDB" id="72160">
    <molecule id="Q8N6D5-1"/>
</dbReference>
<dbReference type="ProteomicsDB" id="72161">
    <molecule id="Q8N6D5-3"/>
</dbReference>
<dbReference type="Antibodypedia" id="22055">
    <property type="antibodies" value="22 antibodies from 10 providers"/>
</dbReference>
<dbReference type="DNASU" id="147463"/>
<dbReference type="Ensembl" id="ENST00000322980.13">
    <molecule id="Q8N6D5-3"/>
    <property type="protein sequence ID" value="ENSP00000323387.9"/>
    <property type="gene ID" value="ENSG00000154065.17"/>
</dbReference>
<dbReference type="Ensembl" id="ENST00000592179.6">
    <molecule id="Q8N6D5-1"/>
    <property type="protein sequence ID" value="ENSP00000468354.1"/>
    <property type="gene ID" value="ENSG00000154065.17"/>
</dbReference>
<dbReference type="GeneID" id="147463"/>
<dbReference type="KEGG" id="hsa:147463"/>
<dbReference type="MANE-Select" id="ENST00000592179.6">
    <property type="protein sequence ID" value="ENSP00000468354.1"/>
    <property type="RefSeq nucleotide sequence ID" value="NM_173505.4"/>
    <property type="RefSeq protein sequence ID" value="NP_775776.2"/>
</dbReference>
<dbReference type="UCSC" id="uc002kun.4">
    <molecule id="Q8N6D5-1"/>
    <property type="organism name" value="human"/>
</dbReference>
<dbReference type="AGR" id="HGNC:27110"/>
<dbReference type="CTD" id="147463"/>
<dbReference type="GeneCards" id="ANKRD29"/>
<dbReference type="HGNC" id="HGNC:27110">
    <property type="gene designation" value="ANKRD29"/>
</dbReference>
<dbReference type="HPA" id="ENSG00000154065">
    <property type="expression patterns" value="Low tissue specificity"/>
</dbReference>
<dbReference type="neXtProt" id="NX_Q8N6D5"/>
<dbReference type="OpenTargets" id="ENSG00000154065"/>
<dbReference type="PharmGKB" id="PA134948058"/>
<dbReference type="VEuPathDB" id="HostDB:ENSG00000154065"/>
<dbReference type="eggNOG" id="KOG0504">
    <property type="taxonomic scope" value="Eukaryota"/>
</dbReference>
<dbReference type="GeneTree" id="ENSGT00940000153902"/>
<dbReference type="HOGENOM" id="CLU_000134_18_0_1"/>
<dbReference type="InParanoid" id="Q8N6D5"/>
<dbReference type="OMA" id="CKDSYGT"/>
<dbReference type="OrthoDB" id="7464126at2759"/>
<dbReference type="PAN-GO" id="Q8N6D5">
    <property type="GO annotations" value="0 GO annotations based on evolutionary models"/>
</dbReference>
<dbReference type="PhylomeDB" id="Q8N6D5"/>
<dbReference type="PathwayCommons" id="Q8N6D5"/>
<dbReference type="SignaLink" id="Q8N6D5"/>
<dbReference type="BioGRID-ORCS" id="147463">
    <property type="hits" value="14 hits in 1069 CRISPR screens"/>
</dbReference>
<dbReference type="ChiTaRS" id="ANKRD29">
    <property type="organism name" value="human"/>
</dbReference>
<dbReference type="GenomeRNAi" id="147463"/>
<dbReference type="Pharos" id="Q8N6D5">
    <property type="development level" value="Tdark"/>
</dbReference>
<dbReference type="PRO" id="PR:Q8N6D5"/>
<dbReference type="Proteomes" id="UP000005640">
    <property type="component" value="Chromosome 18"/>
</dbReference>
<dbReference type="RNAct" id="Q8N6D5">
    <property type="molecule type" value="protein"/>
</dbReference>
<dbReference type="Bgee" id="ENSG00000154065">
    <property type="expression patterns" value="Expressed in right lung and 161 other cell types or tissues"/>
</dbReference>
<dbReference type="ExpressionAtlas" id="Q8N6D5">
    <property type="expression patterns" value="baseline and differential"/>
</dbReference>
<dbReference type="Gene3D" id="1.25.40.20">
    <property type="entry name" value="Ankyrin repeat-containing domain"/>
    <property type="match status" value="2"/>
</dbReference>
<dbReference type="InterPro" id="IPR002110">
    <property type="entry name" value="Ankyrin_rpt"/>
</dbReference>
<dbReference type="InterPro" id="IPR036770">
    <property type="entry name" value="Ankyrin_rpt-contain_sf"/>
</dbReference>
<dbReference type="InterPro" id="IPR050889">
    <property type="entry name" value="Dendritic_Spine_Reg/Scaffold"/>
</dbReference>
<dbReference type="PANTHER" id="PTHR24166:SF48">
    <property type="entry name" value="PROTEIN VAPYRIN"/>
    <property type="match status" value="1"/>
</dbReference>
<dbReference type="PANTHER" id="PTHR24166">
    <property type="entry name" value="ROLLING PEBBLES, ISOFORM B"/>
    <property type="match status" value="1"/>
</dbReference>
<dbReference type="Pfam" id="PF00023">
    <property type="entry name" value="Ank"/>
    <property type="match status" value="1"/>
</dbReference>
<dbReference type="Pfam" id="PF12796">
    <property type="entry name" value="Ank_2"/>
    <property type="match status" value="2"/>
</dbReference>
<dbReference type="Pfam" id="PF13637">
    <property type="entry name" value="Ank_4"/>
    <property type="match status" value="1"/>
</dbReference>
<dbReference type="PRINTS" id="PR01415">
    <property type="entry name" value="ANKYRIN"/>
</dbReference>
<dbReference type="SMART" id="SM00248">
    <property type="entry name" value="ANK"/>
    <property type="match status" value="8"/>
</dbReference>
<dbReference type="SUPFAM" id="SSF48403">
    <property type="entry name" value="Ankyrin repeat"/>
    <property type="match status" value="1"/>
</dbReference>
<dbReference type="PROSITE" id="PS50297">
    <property type="entry name" value="ANK_REP_REGION"/>
    <property type="match status" value="1"/>
</dbReference>
<dbReference type="PROSITE" id="PS50088">
    <property type="entry name" value="ANK_REPEAT"/>
    <property type="match status" value="6"/>
</dbReference>
<organism>
    <name type="scientific">Homo sapiens</name>
    <name type="common">Human</name>
    <dbReference type="NCBI Taxonomy" id="9606"/>
    <lineage>
        <taxon>Eukaryota</taxon>
        <taxon>Metazoa</taxon>
        <taxon>Chordata</taxon>
        <taxon>Craniata</taxon>
        <taxon>Vertebrata</taxon>
        <taxon>Euteleostomi</taxon>
        <taxon>Mammalia</taxon>
        <taxon>Eutheria</taxon>
        <taxon>Euarchontoglires</taxon>
        <taxon>Primates</taxon>
        <taxon>Haplorrhini</taxon>
        <taxon>Catarrhini</taxon>
        <taxon>Hominidae</taxon>
        <taxon>Homo</taxon>
    </lineage>
</organism>
<feature type="chain" id="PRO_0000243903" description="Ankyrin repeat domain-containing protein 29">
    <location>
        <begin position="1"/>
        <end position="301"/>
    </location>
</feature>
<feature type="repeat" description="ANK 1">
    <location>
        <begin position="11"/>
        <end position="41"/>
    </location>
</feature>
<feature type="repeat" description="ANK 2">
    <location>
        <begin position="45"/>
        <end position="74"/>
    </location>
</feature>
<feature type="repeat" description="ANK 3">
    <location>
        <begin position="78"/>
        <end position="107"/>
    </location>
</feature>
<feature type="repeat" description="ANK 4">
    <location>
        <begin position="111"/>
        <end position="140"/>
    </location>
</feature>
<feature type="repeat" description="ANK 5">
    <location>
        <begin position="144"/>
        <end position="173"/>
    </location>
</feature>
<feature type="repeat" description="ANK 6">
    <location>
        <begin position="177"/>
        <end position="206"/>
    </location>
</feature>
<feature type="repeat" description="ANK 7">
    <location>
        <begin position="210"/>
        <end position="239"/>
    </location>
</feature>
<feature type="repeat" description="ANK 8">
    <location>
        <begin position="242"/>
        <end position="271"/>
    </location>
</feature>
<feature type="splice variant" id="VSP_019488" description="In isoform 3." evidence="3">
    <location>
        <begin position="242"/>
        <end position="274"/>
    </location>
</feature>
<feature type="sequence variant" id="VAR_035610" description="In a breast cancer sample; somatic mutation; dbSNP:rs767831283." evidence="2">
    <original>V</original>
    <variation>M</variation>
    <location>
        <position position="95"/>
    </location>
</feature>
<feature type="sequence variant" id="VAR_026869" description="In dbSNP:rs17855552." evidence="1">
    <original>G</original>
    <variation>E</variation>
    <location>
        <position position="112"/>
    </location>
</feature>
<sequence>MCRMSFKKETPLANAAFWAARRGNLALLKLLLNSGRVDVDCRDSHGTTLLMVAAYAGHIDCVRELVLQGADINLQRESGTTALFFAAQQGHNDVVRFLFGFGASTEFRTKDGGTALLAASQYGHMQVVETLLKHGANIHDQLYDGATALFLAAQGGYLDVIRLLLASGAKVNQPRQDGTAPLWIASQMGHSEVVRVMLLRGADRDAARNDGTTALLKAANKGYNDVIKELLKFSPTLGILKNGTSALHAAVLSGNIKTVALLLEAGADPSLRNKANELPAELTKNERILRLLRSKEGPRKS</sequence>
<proteinExistence type="evidence at protein level"/>
<protein>
    <recommendedName>
        <fullName>Ankyrin repeat domain-containing protein 29</fullName>
    </recommendedName>
</protein>
<name>ANR29_HUMAN</name>
<comment type="interaction">
    <interactant intactId="EBI-17439331">
        <id>Q8N6D5</id>
    </interactant>
    <interactant intactId="EBI-12011224">
        <id>Q9NPB3</id>
        <label>CABP2</label>
    </interactant>
    <organismsDiffer>false</organismsDiffer>
    <experiments>3</experiments>
</comment>
<comment type="interaction">
    <interactant intactId="EBI-17439331">
        <id>Q8N6D5</id>
    </interactant>
    <interactant intactId="EBI-739773">
        <id>Q9BSW2</id>
        <label>CRACR2A</label>
    </interactant>
    <organismsDiffer>false</organismsDiffer>
    <experiments>3</experiments>
</comment>
<comment type="interaction">
    <interactant intactId="EBI-17439331">
        <id>Q8N6D5</id>
    </interactant>
    <interactant intactId="EBI-6658203">
        <id>Q86YD7</id>
        <label>FAM90A1</label>
    </interactant>
    <organismsDiffer>false</organismsDiffer>
    <experiments>3</experiments>
</comment>
<comment type="interaction">
    <interactant intactId="EBI-17439331">
        <id>Q8N6D5</id>
    </interactant>
    <interactant intactId="EBI-12915620">
        <id>Q86UX7-2</id>
        <label>FERMT3</label>
    </interactant>
    <organismsDiffer>false</organismsDiffer>
    <experiments>3</experiments>
</comment>
<comment type="interaction">
    <interactant intactId="EBI-17439331">
        <id>Q8N6D5</id>
    </interactant>
    <interactant intactId="EBI-6380438">
        <id>Q6ZYL4</id>
        <label>GTF2H5</label>
    </interactant>
    <organismsDiffer>false</organismsDiffer>
    <experiments>3</experiments>
</comment>
<comment type="interaction">
    <interactant intactId="EBI-17439331">
        <id>Q8N6D5</id>
    </interactant>
    <interactant intactId="EBI-702665">
        <id>P02724</id>
        <label>GYPA</label>
    </interactant>
    <organismsDiffer>false</organismsDiffer>
    <experiments>3</experiments>
</comment>
<comment type="interaction">
    <interactant intactId="EBI-17439331">
        <id>Q8N6D5</id>
    </interactant>
    <interactant intactId="EBI-3915568">
        <id>P50747</id>
        <label>HLCS</label>
    </interactant>
    <organismsDiffer>false</organismsDiffer>
    <experiments>3</experiments>
</comment>
<comment type="interaction">
    <interactant intactId="EBI-17439331">
        <id>Q8N6D5</id>
    </interactant>
    <interactant intactId="EBI-2513715">
        <id>Q96EL3</id>
        <label>MRPL53</label>
    </interactant>
    <organismsDiffer>false</organismsDiffer>
    <experiments>3</experiments>
</comment>
<comment type="interaction">
    <interactant intactId="EBI-17439331">
        <id>Q8N6D5</id>
    </interactant>
    <interactant intactId="EBI-14093916">
        <id>Q9UJ41-4</id>
        <label>RABGEF1</label>
    </interactant>
    <organismsDiffer>false</organismsDiffer>
    <experiments>3</experiments>
</comment>
<comment type="interaction">
    <interactant intactId="EBI-17439331">
        <id>Q8N6D5</id>
    </interactant>
    <interactant intactId="EBI-12220239">
        <id>Q8NFA0-2</id>
        <label>USP32</label>
    </interactant>
    <organismsDiffer>false</organismsDiffer>
    <experiments>3</experiments>
</comment>
<comment type="alternative products">
    <event type="alternative splicing"/>
    <isoform>
        <id>Q8N6D5-1</id>
        <name>1</name>
        <sequence type="displayed"/>
    </isoform>
    <isoform>
        <id>Q8N6D5-3</id>
        <name>3</name>
        <sequence type="described" ref="VSP_019488"/>
    </isoform>
</comment>
<comment type="sequence caution" evidence="4">
    <conflict type="miscellaneous discrepancy">
        <sequence resource="EMBL-CDS" id="BAC85555"/>
    </conflict>
    <text>Intron retention.</text>
</comment>
<reference key="1">
    <citation type="journal article" date="2004" name="Nat. Genet.">
        <title>Complete sequencing and characterization of 21,243 full-length human cDNAs.</title>
        <authorList>
            <person name="Ota T."/>
            <person name="Suzuki Y."/>
            <person name="Nishikawa T."/>
            <person name="Otsuki T."/>
            <person name="Sugiyama T."/>
            <person name="Irie R."/>
            <person name="Wakamatsu A."/>
            <person name="Hayashi K."/>
            <person name="Sato H."/>
            <person name="Nagai K."/>
            <person name="Kimura K."/>
            <person name="Makita H."/>
            <person name="Sekine M."/>
            <person name="Obayashi M."/>
            <person name="Nishi T."/>
            <person name="Shibahara T."/>
            <person name="Tanaka T."/>
            <person name="Ishii S."/>
            <person name="Yamamoto J."/>
            <person name="Saito K."/>
            <person name="Kawai Y."/>
            <person name="Isono Y."/>
            <person name="Nakamura Y."/>
            <person name="Nagahari K."/>
            <person name="Murakami K."/>
            <person name="Yasuda T."/>
            <person name="Iwayanagi T."/>
            <person name="Wagatsuma M."/>
            <person name="Shiratori A."/>
            <person name="Sudo H."/>
            <person name="Hosoiri T."/>
            <person name="Kaku Y."/>
            <person name="Kodaira H."/>
            <person name="Kondo H."/>
            <person name="Sugawara M."/>
            <person name="Takahashi M."/>
            <person name="Kanda K."/>
            <person name="Yokoi T."/>
            <person name="Furuya T."/>
            <person name="Kikkawa E."/>
            <person name="Omura Y."/>
            <person name="Abe K."/>
            <person name="Kamihara K."/>
            <person name="Katsuta N."/>
            <person name="Sato K."/>
            <person name="Tanikawa M."/>
            <person name="Yamazaki M."/>
            <person name="Ninomiya K."/>
            <person name="Ishibashi T."/>
            <person name="Yamashita H."/>
            <person name="Murakawa K."/>
            <person name="Fujimori K."/>
            <person name="Tanai H."/>
            <person name="Kimata M."/>
            <person name="Watanabe M."/>
            <person name="Hiraoka S."/>
            <person name="Chiba Y."/>
            <person name="Ishida S."/>
            <person name="Ono Y."/>
            <person name="Takiguchi S."/>
            <person name="Watanabe S."/>
            <person name="Yosida M."/>
            <person name="Hotuta T."/>
            <person name="Kusano J."/>
            <person name="Kanehori K."/>
            <person name="Takahashi-Fujii A."/>
            <person name="Hara H."/>
            <person name="Tanase T.-O."/>
            <person name="Nomura Y."/>
            <person name="Togiya S."/>
            <person name="Komai F."/>
            <person name="Hara R."/>
            <person name="Takeuchi K."/>
            <person name="Arita M."/>
            <person name="Imose N."/>
            <person name="Musashino K."/>
            <person name="Yuuki H."/>
            <person name="Oshima A."/>
            <person name="Sasaki N."/>
            <person name="Aotsuka S."/>
            <person name="Yoshikawa Y."/>
            <person name="Matsunawa H."/>
            <person name="Ichihara T."/>
            <person name="Shiohata N."/>
            <person name="Sano S."/>
            <person name="Moriya S."/>
            <person name="Momiyama H."/>
            <person name="Satoh N."/>
            <person name="Takami S."/>
            <person name="Terashima Y."/>
            <person name="Suzuki O."/>
            <person name="Nakagawa S."/>
            <person name="Senoh A."/>
            <person name="Mizoguchi H."/>
            <person name="Goto Y."/>
            <person name="Shimizu F."/>
            <person name="Wakebe H."/>
            <person name="Hishigaki H."/>
            <person name="Watanabe T."/>
            <person name="Sugiyama A."/>
            <person name="Takemoto M."/>
            <person name="Kawakami B."/>
            <person name="Yamazaki M."/>
            <person name="Watanabe K."/>
            <person name="Kumagai A."/>
            <person name="Itakura S."/>
            <person name="Fukuzumi Y."/>
            <person name="Fujimori Y."/>
            <person name="Komiyama M."/>
            <person name="Tashiro H."/>
            <person name="Tanigami A."/>
            <person name="Fujiwara T."/>
            <person name="Ono T."/>
            <person name="Yamada K."/>
            <person name="Fujii Y."/>
            <person name="Ozaki K."/>
            <person name="Hirao M."/>
            <person name="Ohmori Y."/>
            <person name="Kawabata A."/>
            <person name="Hikiji T."/>
            <person name="Kobatake N."/>
            <person name="Inagaki H."/>
            <person name="Ikema Y."/>
            <person name="Okamoto S."/>
            <person name="Okitani R."/>
            <person name="Kawakami T."/>
            <person name="Noguchi S."/>
            <person name="Itoh T."/>
            <person name="Shigeta K."/>
            <person name="Senba T."/>
            <person name="Matsumura K."/>
            <person name="Nakajima Y."/>
            <person name="Mizuno T."/>
            <person name="Morinaga M."/>
            <person name="Sasaki M."/>
            <person name="Togashi T."/>
            <person name="Oyama M."/>
            <person name="Hata H."/>
            <person name="Watanabe M."/>
            <person name="Komatsu T."/>
            <person name="Mizushima-Sugano J."/>
            <person name="Satoh T."/>
            <person name="Shirai Y."/>
            <person name="Takahashi Y."/>
            <person name="Nakagawa K."/>
            <person name="Okumura K."/>
            <person name="Nagase T."/>
            <person name="Nomura N."/>
            <person name="Kikuchi H."/>
            <person name="Masuho Y."/>
            <person name="Yamashita R."/>
            <person name="Nakai K."/>
            <person name="Yada T."/>
            <person name="Nakamura Y."/>
            <person name="Ohara O."/>
            <person name="Isogai T."/>
            <person name="Sugano S."/>
        </authorList>
    </citation>
    <scope>NUCLEOTIDE SEQUENCE [LARGE SCALE MRNA] (ISOFORMS 1 AND 3)</scope>
    <source>
        <tissue>Brain</tissue>
        <tissue>Cerebellum</tissue>
    </source>
</reference>
<reference key="2">
    <citation type="journal article" date="2005" name="Nature">
        <title>DNA sequence and analysis of human chromosome 18.</title>
        <authorList>
            <person name="Nusbaum C."/>
            <person name="Zody M.C."/>
            <person name="Borowsky M.L."/>
            <person name="Kamal M."/>
            <person name="Kodira C.D."/>
            <person name="Taylor T.D."/>
            <person name="Whittaker C.A."/>
            <person name="Chang J.L."/>
            <person name="Cuomo C.A."/>
            <person name="Dewar K."/>
            <person name="FitzGerald M.G."/>
            <person name="Yang X."/>
            <person name="Abouelleil A."/>
            <person name="Allen N.R."/>
            <person name="Anderson S."/>
            <person name="Bloom T."/>
            <person name="Bugalter B."/>
            <person name="Butler J."/>
            <person name="Cook A."/>
            <person name="DeCaprio D."/>
            <person name="Engels R."/>
            <person name="Garber M."/>
            <person name="Gnirke A."/>
            <person name="Hafez N."/>
            <person name="Hall J.L."/>
            <person name="Norman C.H."/>
            <person name="Itoh T."/>
            <person name="Jaffe D.B."/>
            <person name="Kuroki Y."/>
            <person name="Lehoczky J."/>
            <person name="Lui A."/>
            <person name="Macdonald P."/>
            <person name="Mauceli E."/>
            <person name="Mikkelsen T.S."/>
            <person name="Naylor J.W."/>
            <person name="Nicol R."/>
            <person name="Nguyen C."/>
            <person name="Noguchi H."/>
            <person name="O'Leary S.B."/>
            <person name="Piqani B."/>
            <person name="Smith C.L."/>
            <person name="Talamas J.A."/>
            <person name="Topham K."/>
            <person name="Totoki Y."/>
            <person name="Toyoda A."/>
            <person name="Wain H.M."/>
            <person name="Young S.K."/>
            <person name="Zeng Q."/>
            <person name="Zimmer A.R."/>
            <person name="Fujiyama A."/>
            <person name="Hattori M."/>
            <person name="Birren B.W."/>
            <person name="Sakaki Y."/>
            <person name="Lander E.S."/>
        </authorList>
    </citation>
    <scope>NUCLEOTIDE SEQUENCE [LARGE SCALE GENOMIC DNA]</scope>
</reference>
<reference key="3">
    <citation type="submission" date="2005-07" db="EMBL/GenBank/DDBJ databases">
        <authorList>
            <person name="Mural R.J."/>
            <person name="Istrail S."/>
            <person name="Sutton G.G."/>
            <person name="Florea L."/>
            <person name="Halpern A.L."/>
            <person name="Mobarry C.M."/>
            <person name="Lippert R."/>
            <person name="Walenz B."/>
            <person name="Shatkay H."/>
            <person name="Dew I."/>
            <person name="Miller J.R."/>
            <person name="Flanigan M.J."/>
            <person name="Edwards N.J."/>
            <person name="Bolanos R."/>
            <person name="Fasulo D."/>
            <person name="Halldorsson B.V."/>
            <person name="Hannenhalli S."/>
            <person name="Turner R."/>
            <person name="Yooseph S."/>
            <person name="Lu F."/>
            <person name="Nusskern D.R."/>
            <person name="Shue B.C."/>
            <person name="Zheng X.H."/>
            <person name="Zhong F."/>
            <person name="Delcher A.L."/>
            <person name="Huson D.H."/>
            <person name="Kravitz S.A."/>
            <person name="Mouchard L."/>
            <person name="Reinert K."/>
            <person name="Remington K.A."/>
            <person name="Clark A.G."/>
            <person name="Waterman M.S."/>
            <person name="Eichler E.E."/>
            <person name="Adams M.D."/>
            <person name="Hunkapiller M.W."/>
            <person name="Myers E.W."/>
            <person name="Venter J.C."/>
        </authorList>
    </citation>
    <scope>NUCLEOTIDE SEQUENCE [LARGE SCALE GENOMIC DNA]</scope>
</reference>
<reference key="4">
    <citation type="journal article" date="2004" name="Genome Res.">
        <title>The status, quality, and expansion of the NIH full-length cDNA project: the Mammalian Gene Collection (MGC).</title>
        <authorList>
            <consortium name="The MGC Project Team"/>
        </authorList>
    </citation>
    <scope>NUCLEOTIDE SEQUENCE [LARGE SCALE MRNA] (ISOFORM 1)</scope>
    <scope>VARIANT GLU-112</scope>
    <source>
        <tissue>Brain</tissue>
    </source>
</reference>
<reference key="5">
    <citation type="journal article" date="2006" name="Science">
        <title>The consensus coding sequences of human breast and colorectal cancers.</title>
        <authorList>
            <person name="Sjoeblom T."/>
            <person name="Jones S."/>
            <person name="Wood L.D."/>
            <person name="Parsons D.W."/>
            <person name="Lin J."/>
            <person name="Barber T.D."/>
            <person name="Mandelker D."/>
            <person name="Leary R.J."/>
            <person name="Ptak J."/>
            <person name="Silliman N."/>
            <person name="Szabo S."/>
            <person name="Buckhaults P."/>
            <person name="Farrell C."/>
            <person name="Meeh P."/>
            <person name="Markowitz S.D."/>
            <person name="Willis J."/>
            <person name="Dawson D."/>
            <person name="Willson J.K.V."/>
            <person name="Gazdar A.F."/>
            <person name="Hartigan J."/>
            <person name="Wu L."/>
            <person name="Liu C."/>
            <person name="Parmigiani G."/>
            <person name="Park B.H."/>
            <person name="Bachman K.E."/>
            <person name="Papadopoulos N."/>
            <person name="Vogelstein B."/>
            <person name="Kinzler K.W."/>
            <person name="Velculescu V.E."/>
        </authorList>
    </citation>
    <scope>VARIANT [LARGE SCALE ANALYSIS] MET-95</scope>
</reference>
<accession>Q8N6D5</accession>
<accession>B2R972</accession>
<accession>Q6ZWE8</accession>
<accession>Q96LU9</accession>
<keyword id="KW-0025">Alternative splicing</keyword>
<keyword id="KW-0040">ANK repeat</keyword>
<keyword id="KW-1267">Proteomics identification</keyword>
<keyword id="KW-1185">Reference proteome</keyword>
<keyword id="KW-0677">Repeat</keyword>
<evidence type="ECO:0000269" key="1">
    <source>
    </source>
</evidence>
<evidence type="ECO:0000269" key="2">
    <source>
    </source>
</evidence>
<evidence type="ECO:0000303" key="3">
    <source>
    </source>
</evidence>
<evidence type="ECO:0000305" key="4"/>